<proteinExistence type="inferred from homology"/>
<gene>
    <name evidence="1" type="primary">acpS</name>
    <name type="ordered locus">FMG_1196</name>
</gene>
<dbReference type="EC" id="2.7.8.7" evidence="1"/>
<dbReference type="EMBL" id="AP008971">
    <property type="protein sequence ID" value="BAG08614.1"/>
    <property type="molecule type" value="Genomic_DNA"/>
</dbReference>
<dbReference type="RefSeq" id="WP_002842400.1">
    <property type="nucleotide sequence ID" value="NC_010376.1"/>
</dbReference>
<dbReference type="SMR" id="B0S2M4"/>
<dbReference type="STRING" id="334413.FMG_1196"/>
<dbReference type="KEGG" id="fma:FMG_1196"/>
<dbReference type="eggNOG" id="COG0736">
    <property type="taxonomic scope" value="Bacteria"/>
</dbReference>
<dbReference type="HOGENOM" id="CLU_089696_0_2_9"/>
<dbReference type="Proteomes" id="UP000001319">
    <property type="component" value="Chromosome"/>
</dbReference>
<dbReference type="GO" id="GO:0005737">
    <property type="term" value="C:cytoplasm"/>
    <property type="evidence" value="ECO:0007669"/>
    <property type="project" value="UniProtKB-SubCell"/>
</dbReference>
<dbReference type="GO" id="GO:0008897">
    <property type="term" value="F:holo-[acyl-carrier-protein] synthase activity"/>
    <property type="evidence" value="ECO:0007669"/>
    <property type="project" value="UniProtKB-UniRule"/>
</dbReference>
<dbReference type="GO" id="GO:0000287">
    <property type="term" value="F:magnesium ion binding"/>
    <property type="evidence" value="ECO:0007669"/>
    <property type="project" value="UniProtKB-UniRule"/>
</dbReference>
<dbReference type="GO" id="GO:0006633">
    <property type="term" value="P:fatty acid biosynthetic process"/>
    <property type="evidence" value="ECO:0007669"/>
    <property type="project" value="UniProtKB-UniRule"/>
</dbReference>
<dbReference type="Gene3D" id="3.90.470.20">
    <property type="entry name" value="4'-phosphopantetheinyl transferase domain"/>
    <property type="match status" value="1"/>
</dbReference>
<dbReference type="HAMAP" id="MF_00101">
    <property type="entry name" value="AcpS"/>
    <property type="match status" value="1"/>
</dbReference>
<dbReference type="InterPro" id="IPR008278">
    <property type="entry name" value="4-PPantetheinyl_Trfase_dom"/>
</dbReference>
<dbReference type="InterPro" id="IPR037143">
    <property type="entry name" value="4-PPantetheinyl_Trfase_dom_sf"/>
</dbReference>
<dbReference type="InterPro" id="IPR002582">
    <property type="entry name" value="ACPS"/>
</dbReference>
<dbReference type="InterPro" id="IPR004568">
    <property type="entry name" value="Ppantetheine-prot_Trfase_dom"/>
</dbReference>
<dbReference type="NCBIfam" id="TIGR00516">
    <property type="entry name" value="acpS"/>
    <property type="match status" value="1"/>
</dbReference>
<dbReference type="NCBIfam" id="TIGR00556">
    <property type="entry name" value="pantethn_trn"/>
    <property type="match status" value="1"/>
</dbReference>
<dbReference type="Pfam" id="PF01648">
    <property type="entry name" value="ACPS"/>
    <property type="match status" value="1"/>
</dbReference>
<dbReference type="SUPFAM" id="SSF56214">
    <property type="entry name" value="4'-phosphopantetheinyl transferase"/>
    <property type="match status" value="1"/>
</dbReference>
<organism>
    <name type="scientific">Finegoldia magna (strain ATCC 29328 / DSM 20472 / WAL 2508)</name>
    <name type="common">Peptostreptococcus magnus</name>
    <dbReference type="NCBI Taxonomy" id="334413"/>
    <lineage>
        <taxon>Bacteria</taxon>
        <taxon>Bacillati</taxon>
        <taxon>Bacillota</taxon>
        <taxon>Tissierellia</taxon>
        <taxon>Tissierellales</taxon>
        <taxon>Peptoniphilaceae</taxon>
        <taxon>Finegoldia</taxon>
    </lineage>
</organism>
<comment type="function">
    <text evidence="1">Transfers the 4'-phosphopantetheine moiety from coenzyme A to a Ser of acyl-carrier-protein.</text>
</comment>
<comment type="catalytic activity">
    <reaction evidence="1">
        <text>apo-[ACP] + CoA = holo-[ACP] + adenosine 3',5'-bisphosphate + H(+)</text>
        <dbReference type="Rhea" id="RHEA:12068"/>
        <dbReference type="Rhea" id="RHEA-COMP:9685"/>
        <dbReference type="Rhea" id="RHEA-COMP:9690"/>
        <dbReference type="ChEBI" id="CHEBI:15378"/>
        <dbReference type="ChEBI" id="CHEBI:29999"/>
        <dbReference type="ChEBI" id="CHEBI:57287"/>
        <dbReference type="ChEBI" id="CHEBI:58343"/>
        <dbReference type="ChEBI" id="CHEBI:64479"/>
        <dbReference type="EC" id="2.7.8.7"/>
    </reaction>
</comment>
<comment type="cofactor">
    <cofactor evidence="1">
        <name>Mg(2+)</name>
        <dbReference type="ChEBI" id="CHEBI:18420"/>
    </cofactor>
</comment>
<comment type="subcellular location">
    <subcellularLocation>
        <location evidence="1">Cytoplasm</location>
    </subcellularLocation>
</comment>
<comment type="similarity">
    <text evidence="1">Belongs to the P-Pant transferase superfamily. AcpS family.</text>
</comment>
<sequence>MKIRCGTDILRVSRIKNIKNLDKFMKKVFTEREISYIESKNRSFETITGMFCMKEAVSKALKTGIGKMSFMDVESIHDDGLVVKLNTDKFPKVLDIDASISHDGEYAVAMCVLMLED</sequence>
<evidence type="ECO:0000255" key="1">
    <source>
        <dbReference type="HAMAP-Rule" id="MF_00101"/>
    </source>
</evidence>
<keyword id="KW-0963">Cytoplasm</keyword>
<keyword id="KW-0275">Fatty acid biosynthesis</keyword>
<keyword id="KW-0276">Fatty acid metabolism</keyword>
<keyword id="KW-0444">Lipid biosynthesis</keyword>
<keyword id="KW-0443">Lipid metabolism</keyword>
<keyword id="KW-0460">Magnesium</keyword>
<keyword id="KW-0479">Metal-binding</keyword>
<keyword id="KW-1185">Reference proteome</keyword>
<keyword id="KW-0808">Transferase</keyword>
<reference key="1">
    <citation type="journal article" date="2008" name="DNA Res.">
        <title>Complete genome sequence of Finegoldia magna, an anaerobic opportunistic pathogen.</title>
        <authorList>
            <person name="Goto T."/>
            <person name="Yamashita A."/>
            <person name="Hirakawa H."/>
            <person name="Matsutani M."/>
            <person name="Todo K."/>
            <person name="Ohshima K."/>
            <person name="Toh H."/>
            <person name="Miyamoto K."/>
            <person name="Kuhara S."/>
            <person name="Hattori M."/>
            <person name="Shimizu T."/>
            <person name="Akimoto S."/>
        </authorList>
    </citation>
    <scope>NUCLEOTIDE SEQUENCE [LARGE SCALE GENOMIC DNA]</scope>
    <source>
        <strain>ATCC 29328 / DSM 20472 / WAL 2508</strain>
    </source>
</reference>
<name>ACPS_FINM2</name>
<feature type="chain" id="PRO_1000093877" description="Holo-[acyl-carrier-protein] synthase">
    <location>
        <begin position="1"/>
        <end position="117"/>
    </location>
</feature>
<feature type="binding site" evidence="1">
    <location>
        <position position="8"/>
    </location>
    <ligand>
        <name>Mg(2+)</name>
        <dbReference type="ChEBI" id="CHEBI:18420"/>
    </ligand>
</feature>
<feature type="binding site" evidence="1">
    <location>
        <position position="55"/>
    </location>
    <ligand>
        <name>Mg(2+)</name>
        <dbReference type="ChEBI" id="CHEBI:18420"/>
    </ligand>
</feature>
<protein>
    <recommendedName>
        <fullName evidence="1">Holo-[acyl-carrier-protein] synthase</fullName>
        <shortName evidence="1">Holo-ACP synthase</shortName>
        <ecNumber evidence="1">2.7.8.7</ecNumber>
    </recommendedName>
    <alternativeName>
        <fullName evidence="1">4'-phosphopantetheinyl transferase AcpS</fullName>
    </alternativeName>
</protein>
<accession>B0S2M4</accession>